<proteinExistence type="inferred from homology"/>
<protein>
    <recommendedName>
        <fullName evidence="1">Probable DNA-directed RNA polymerase subunit delta</fullName>
    </recommendedName>
    <alternativeName>
        <fullName evidence="1">RNAP delta factor</fullName>
    </alternativeName>
</protein>
<reference key="1">
    <citation type="journal article" date="2006" name="Proc. Natl. Acad. Sci. U.S.A.">
        <title>Comparative genomics of the lactic acid bacteria.</title>
        <authorList>
            <person name="Makarova K.S."/>
            <person name="Slesarev A."/>
            <person name="Wolf Y.I."/>
            <person name="Sorokin A."/>
            <person name="Mirkin B."/>
            <person name="Koonin E.V."/>
            <person name="Pavlov A."/>
            <person name="Pavlova N."/>
            <person name="Karamychev V."/>
            <person name="Polouchine N."/>
            <person name="Shakhova V."/>
            <person name="Grigoriev I."/>
            <person name="Lou Y."/>
            <person name="Rohksar D."/>
            <person name="Lucas S."/>
            <person name="Huang K."/>
            <person name="Goodstein D.M."/>
            <person name="Hawkins T."/>
            <person name="Plengvidhya V."/>
            <person name="Welker D."/>
            <person name="Hughes J."/>
            <person name="Goh Y."/>
            <person name="Benson A."/>
            <person name="Baldwin K."/>
            <person name="Lee J.-H."/>
            <person name="Diaz-Muniz I."/>
            <person name="Dosti B."/>
            <person name="Smeianov V."/>
            <person name="Wechter W."/>
            <person name="Barabote R."/>
            <person name="Lorca G."/>
            <person name="Altermann E."/>
            <person name="Barrangou R."/>
            <person name="Ganesan B."/>
            <person name="Xie Y."/>
            <person name="Rawsthorne H."/>
            <person name="Tamir D."/>
            <person name="Parker C."/>
            <person name="Breidt F."/>
            <person name="Broadbent J.R."/>
            <person name="Hutkins R."/>
            <person name="O'Sullivan D."/>
            <person name="Steele J."/>
            <person name="Unlu G."/>
            <person name="Saier M.H. Jr."/>
            <person name="Klaenhammer T."/>
            <person name="Richardson P."/>
            <person name="Kozyavkin S."/>
            <person name="Weimer B.C."/>
            <person name="Mills D.A."/>
        </authorList>
    </citation>
    <scope>NUCLEOTIDE SEQUENCE [LARGE SCALE GENOMIC DNA]</scope>
    <source>
        <strain>ATCC BAA-491 / LMD-9</strain>
    </source>
</reference>
<organism>
    <name type="scientific">Streptococcus thermophilus (strain ATCC BAA-491 / LMD-9)</name>
    <dbReference type="NCBI Taxonomy" id="322159"/>
    <lineage>
        <taxon>Bacteria</taxon>
        <taxon>Bacillati</taxon>
        <taxon>Bacillota</taxon>
        <taxon>Bacilli</taxon>
        <taxon>Lactobacillales</taxon>
        <taxon>Streptococcaceae</taxon>
        <taxon>Streptococcus</taxon>
    </lineage>
</organism>
<comment type="function">
    <text evidence="1">Participates in both the initiation and recycling phases of transcription. In the presence of the delta subunit, RNAP displays an increased specificity of transcription, a decreased affinity for nucleic acids, and an increased efficiency of RNA synthesis because of enhanced recycling.</text>
</comment>
<comment type="subunit">
    <text evidence="1">RNAP is composed of a core of 2 alpha, a beta and a beta' subunits. The core is associated with a delta subunit and one of several sigma factors.</text>
</comment>
<comment type="similarity">
    <text evidence="1">Belongs to the RpoE family.</text>
</comment>
<sequence>MELDVFAGQEKSELSMIEVARAILETRGRDKEMYFNDLVNEIQNYLEKSDADIRSALPFFYSDLNTDGSFIPLGDNKWGLRSWYAIDEIDEEVITLEDIDENAPKRKNKKVNAFMDGDEDAIDYNDDDPEDENFTPSSAILEYDNDNEDDENAEVESYDSELNEIIPDDDLDDVELSEEDDDDDYEDETND</sequence>
<gene>
    <name evidence="1" type="primary">rpoE</name>
    <name type="ordered locus">STER_0192</name>
</gene>
<feature type="chain" id="PRO_0000303148" description="Probable DNA-directed RNA polymerase subunit delta">
    <location>
        <begin position="1"/>
        <end position="191"/>
    </location>
</feature>
<feature type="domain" description="HTH HARE-type" evidence="2">
    <location>
        <begin position="14"/>
        <end position="83"/>
    </location>
</feature>
<feature type="region of interest" description="Disordered" evidence="3">
    <location>
        <begin position="119"/>
        <end position="191"/>
    </location>
</feature>
<feature type="compositionally biased region" description="Acidic residues" evidence="3">
    <location>
        <begin position="119"/>
        <end position="133"/>
    </location>
</feature>
<feature type="compositionally biased region" description="Acidic residues" evidence="3">
    <location>
        <begin position="143"/>
        <end position="191"/>
    </location>
</feature>
<evidence type="ECO:0000255" key="1">
    <source>
        <dbReference type="HAMAP-Rule" id="MF_00357"/>
    </source>
</evidence>
<evidence type="ECO:0000255" key="2">
    <source>
        <dbReference type="PROSITE-ProRule" id="PRU01261"/>
    </source>
</evidence>
<evidence type="ECO:0000256" key="3">
    <source>
        <dbReference type="SAM" id="MobiDB-lite"/>
    </source>
</evidence>
<keyword id="KW-0240">DNA-directed RNA polymerase</keyword>
<keyword id="KW-0548">Nucleotidyltransferase</keyword>
<keyword id="KW-0804">Transcription</keyword>
<keyword id="KW-0808">Transferase</keyword>
<name>RPOE_STRTD</name>
<accession>Q03MQ8</accession>
<dbReference type="EMBL" id="CP000419">
    <property type="protein sequence ID" value="ABJ65514.1"/>
    <property type="molecule type" value="Genomic_DNA"/>
</dbReference>
<dbReference type="RefSeq" id="WP_002949228.1">
    <property type="nucleotide sequence ID" value="NC_008532.1"/>
</dbReference>
<dbReference type="SMR" id="Q03MQ8"/>
<dbReference type="KEGG" id="ste:STER_0192"/>
<dbReference type="HOGENOM" id="CLU_116648_0_0_9"/>
<dbReference type="GO" id="GO:0000428">
    <property type="term" value="C:DNA-directed RNA polymerase complex"/>
    <property type="evidence" value="ECO:0007669"/>
    <property type="project" value="UniProtKB-KW"/>
</dbReference>
<dbReference type="GO" id="GO:0003899">
    <property type="term" value="F:DNA-directed RNA polymerase activity"/>
    <property type="evidence" value="ECO:0007669"/>
    <property type="project" value="UniProtKB-UniRule"/>
</dbReference>
<dbReference type="GO" id="GO:0006351">
    <property type="term" value="P:DNA-templated transcription"/>
    <property type="evidence" value="ECO:0007669"/>
    <property type="project" value="InterPro"/>
</dbReference>
<dbReference type="GO" id="GO:0006355">
    <property type="term" value="P:regulation of DNA-templated transcription"/>
    <property type="evidence" value="ECO:0007669"/>
    <property type="project" value="UniProtKB-UniRule"/>
</dbReference>
<dbReference type="Gene3D" id="1.10.10.1250">
    <property type="entry name" value="RNA polymerase, subunit delta, N-terminal domain"/>
    <property type="match status" value="1"/>
</dbReference>
<dbReference type="HAMAP" id="MF_00357">
    <property type="entry name" value="RNApol_bact_RpoE"/>
    <property type="match status" value="1"/>
</dbReference>
<dbReference type="InterPro" id="IPR007759">
    <property type="entry name" value="Asxl_HARE-HTH"/>
</dbReference>
<dbReference type="InterPro" id="IPR038087">
    <property type="entry name" value="RNAP_delta_N_dom_sf"/>
</dbReference>
<dbReference type="InterPro" id="IPR029757">
    <property type="entry name" value="RpoE"/>
</dbReference>
<dbReference type="NCBIfam" id="TIGR04567">
    <property type="entry name" value="RNAP_delt_lowGC"/>
    <property type="match status" value="1"/>
</dbReference>
<dbReference type="Pfam" id="PF05066">
    <property type="entry name" value="HARE-HTH"/>
    <property type="match status" value="1"/>
</dbReference>
<dbReference type="PROSITE" id="PS51913">
    <property type="entry name" value="HTH_HARE"/>
    <property type="match status" value="1"/>
</dbReference>